<proteinExistence type="evidence at transcript level"/>
<feature type="chain" id="PRO_0000146077" description="DNA-directed RNA polymerases I, II, and III subunit RPABC1">
    <location>
        <begin position="1"/>
        <end position="210"/>
    </location>
</feature>
<feature type="modified residue" description="N-acetylmethionine" evidence="2">
    <location>
        <position position="1"/>
    </location>
</feature>
<feature type="cross-link" description="Glycyl lysine isopeptide (Lys-Gly) (interchain with G-Cter in SUMO2)" evidence="2">
    <location>
        <position position="81"/>
    </location>
</feature>
<sequence>MDDEEETYRLWKIRKTIMQLCHDRGYLVTQDELDQTLEEFRAQFGDKPSEGRPRRTDLTVLVAHNDDPTDQMFVFFPEEPKVGIKTIKVYCQRMQEENITRALIVVQQGMTPSAKQSLVDMAPKYILEQFLQQELLINITEHELVPEHVVMTKEEVTELLARYKLRENQLPRIQAGDPVARYFGIKRGQVVKIIRPSETAGRYITYRLVQ</sequence>
<comment type="function">
    <text evidence="1 2 3">DNA-dependent RNA polymerase catalyzes the transcription of DNA into RNA using the four ribonucleoside triphosphates as substrates. Common component of RNA polymerases I, II and III which synthesize ribosomal RNA precursors, mRNA precursors and many functional non-coding RNAs, and small RNAs, such as 5S rRNA and tRNAs, respectively. Pol II is the central component of the basal RNA polymerase II transcription machinery. Pols are composed of mobile elements that move relative to each other. In Pol II, POLR2E/RPABC1 is part of the lower jaw surrounding the central large cleft and thought to grab the incoming DNA template. Seems to be the major component in this process (By similarity).</text>
</comment>
<comment type="subunit">
    <text evidence="2">Component of the RNA polymerase I (Pol I), RNA polymerase II (Pol II) and RNA polymerase III (Pol III) complexes consisting of at least 13, 12 and 17 subunits, respectively (By similarity). Pol I complex consists of a ten-subunit catalytic core composed of POLR1A/RPA1, POLR1B/RPA2, POLR1C/RPAC1, POLR1D/RPAC2, POLR1H/RPA12, POLR2E/RPABC1, POLR2F/RPABC2, POLR2H/RPABC3, POLR2K/RPABC4 and POLR2L/RPABC5; a mobile stalk subunit POLR1F/RPA43 protruding from the core and additional subunits homologous to general transcription factors POLR1E/RPA49 and POLR1G/RPA34. Part of Pol I pre-initiation complex (PIC), in which Pol I core assembles with RRN3 and promoter-bound UTBF and SL1/TIF-IB complex (By similarity). Pol II complex contains a ten-subunit catalytic core composed of POLR2A/RPB1, POLR2B/RPB2, POLR2C/RPB3, POLR2I/RPB9, POLR2J/RPB11, POLR2E/RPABC1, POLR2F/RPABC2, POLR2H/RPABC3, POLR2K/RPABC4 and POLR2L/RPABC5 and a mobile stalk composed of two subunits POLR2D/RPB4 and POLR2G/RPB7. Part of Pol II(G) complex, in which Pol II core associates with an additional subunit POLR2M; unlike conventional Pol II, Pol II(G) functions as a transcriptional repressor. Part of TBP-based Pol II pre-initiation complex (PIC), in which Pol II core assembles with general transcription factors and other specific initiation factors including GTF2E1, GTF2E2, GTF2F1, GTF2F2, TCEA1, ERCC2, ERCC3, GTF2H2, GTF2H3, GTF2H4, GTF2H5, GTF2A1, GTF2A2, GTF2B and TBP; this large multi-subunit PIC complex mediates DNA unwinding and targets Pol II core to the transcription start site where the first phosphodiester bond forms. In Pol II complex, this subunit is present in 2-fold molar excess over the other subunits. Pol III complex consists of a ten-subunit catalytic core composed of POLR3A/RPC1, POLR3B/RPC2, POLR1C/RPAC1, POLR1D/RPAC2, POLR3K/RPC10, POLR2E/RPABC1, POLR2F/RPABC2, POLR2H/RPABC3, POLR2K/RPABC4 and POLR2L/RPABC5; a mobile stalk composed of two subunits POLR3H/RPC8 and CRCP/RPC9, protruding from the core and functioning primarily in transcription initiation; and additional subunits homologous to general transcription factors of the RNA polymerase II machinery, POLR3C/RPC3-POLR3F/RPC6-POLR3G/RPC7 heterotrimer required for transcription initiation and POLR3D/RPC4-POLR3E/RPC5 heterodimer involved in both transcription initiation and termination. Component of the PAQosome complex which is responsible for the biogenesis of several protein complexes and which consists of R2TP complex members RUVBL1, RUVBL2, RPAP3 and PIH1D1, URI complex members PFDN2, PFDN6, PDRG1, UXT and URI1 as well as ASDURF, POLR2E and DNAAF10/WDR92. Interacts with URI1.</text>
</comment>
<comment type="subcellular location">
    <subcellularLocation>
        <location evidence="2">Nucleus</location>
    </subcellularLocation>
    <subcellularLocation>
        <location evidence="2">Nucleus</location>
        <location evidence="2">Nucleolus</location>
    </subcellularLocation>
</comment>
<comment type="similarity">
    <text evidence="4">Belongs to the archaeal Rpo5/eukaryotic RPB5 RNA polymerase subunit family.</text>
</comment>
<accession>Q5R587</accession>
<organism>
    <name type="scientific">Pongo abelii</name>
    <name type="common">Sumatran orangutan</name>
    <name type="synonym">Pongo pygmaeus abelii</name>
    <dbReference type="NCBI Taxonomy" id="9601"/>
    <lineage>
        <taxon>Eukaryota</taxon>
        <taxon>Metazoa</taxon>
        <taxon>Chordata</taxon>
        <taxon>Craniata</taxon>
        <taxon>Vertebrata</taxon>
        <taxon>Euteleostomi</taxon>
        <taxon>Mammalia</taxon>
        <taxon>Eutheria</taxon>
        <taxon>Euarchontoglires</taxon>
        <taxon>Primates</taxon>
        <taxon>Haplorrhini</taxon>
        <taxon>Catarrhini</taxon>
        <taxon>Hominidae</taxon>
        <taxon>Pongo</taxon>
    </lineage>
</organism>
<dbReference type="EMBL" id="CR860977">
    <property type="protein sequence ID" value="CAH93079.1"/>
    <property type="molecule type" value="mRNA"/>
</dbReference>
<dbReference type="RefSeq" id="NP_001126823.1">
    <property type="nucleotide sequence ID" value="NM_001133351.1"/>
</dbReference>
<dbReference type="SMR" id="Q5R587"/>
<dbReference type="FunCoup" id="Q5R587">
    <property type="interactions" value="2990"/>
</dbReference>
<dbReference type="STRING" id="9601.ENSPPYP00000010442"/>
<dbReference type="GeneID" id="100173829"/>
<dbReference type="KEGG" id="pon:100173829"/>
<dbReference type="CTD" id="5434"/>
<dbReference type="eggNOG" id="KOG3218">
    <property type="taxonomic scope" value="Eukaryota"/>
</dbReference>
<dbReference type="InParanoid" id="Q5R587"/>
<dbReference type="OrthoDB" id="248779at2759"/>
<dbReference type="Proteomes" id="UP000001595">
    <property type="component" value="Unplaced"/>
</dbReference>
<dbReference type="GO" id="GO:0005634">
    <property type="term" value="C:nucleus"/>
    <property type="evidence" value="ECO:0000250"/>
    <property type="project" value="UniProtKB"/>
</dbReference>
<dbReference type="GO" id="GO:0005736">
    <property type="term" value="C:RNA polymerase I complex"/>
    <property type="evidence" value="ECO:0007669"/>
    <property type="project" value="TreeGrafter"/>
</dbReference>
<dbReference type="GO" id="GO:0005665">
    <property type="term" value="C:RNA polymerase II, core complex"/>
    <property type="evidence" value="ECO:0000250"/>
    <property type="project" value="UniProtKB"/>
</dbReference>
<dbReference type="GO" id="GO:0005666">
    <property type="term" value="C:RNA polymerase III complex"/>
    <property type="evidence" value="ECO:0007669"/>
    <property type="project" value="TreeGrafter"/>
</dbReference>
<dbReference type="GO" id="GO:0003677">
    <property type="term" value="F:DNA binding"/>
    <property type="evidence" value="ECO:0007669"/>
    <property type="project" value="InterPro"/>
</dbReference>
<dbReference type="GO" id="GO:0003899">
    <property type="term" value="F:DNA-directed RNA polymerase activity"/>
    <property type="evidence" value="ECO:0007669"/>
    <property type="project" value="InterPro"/>
</dbReference>
<dbReference type="GO" id="GO:0006366">
    <property type="term" value="P:transcription by RNA polymerase II"/>
    <property type="evidence" value="ECO:0000250"/>
    <property type="project" value="UniProtKB"/>
</dbReference>
<dbReference type="GO" id="GO:0006362">
    <property type="term" value="P:transcription elongation by RNA polymerase I"/>
    <property type="evidence" value="ECO:0007669"/>
    <property type="project" value="TreeGrafter"/>
</dbReference>
<dbReference type="GO" id="GO:0042797">
    <property type="term" value="P:tRNA transcription by RNA polymerase III"/>
    <property type="evidence" value="ECO:0007669"/>
    <property type="project" value="TreeGrafter"/>
</dbReference>
<dbReference type="FunFam" id="3.40.1340.10:FF:000001">
    <property type="entry name" value="DNA-directed RNA polymerases I, II, and III subunit RPABC1"/>
    <property type="match status" value="1"/>
</dbReference>
<dbReference type="FunFam" id="3.90.940.20:FF:000001">
    <property type="entry name" value="DNA-directed RNA polymerases I, II, and III subunit RPABC1"/>
    <property type="match status" value="1"/>
</dbReference>
<dbReference type="Gene3D" id="3.40.1340.10">
    <property type="entry name" value="RNA polymerase, Rpb5, N-terminal domain"/>
    <property type="match status" value="1"/>
</dbReference>
<dbReference type="Gene3D" id="3.90.940.20">
    <property type="entry name" value="RPB5-like RNA polymerase subunit"/>
    <property type="match status" value="1"/>
</dbReference>
<dbReference type="HAMAP" id="MF_00025">
    <property type="entry name" value="RNApol_Rpo5_RPB5"/>
    <property type="match status" value="1"/>
</dbReference>
<dbReference type="InterPro" id="IPR014381">
    <property type="entry name" value="Arch_Rpo5/euc_Rpb5"/>
</dbReference>
<dbReference type="InterPro" id="IPR005571">
    <property type="entry name" value="RNA_pol_Rpb5_N"/>
</dbReference>
<dbReference type="InterPro" id="IPR036710">
    <property type="entry name" value="RNA_pol_Rpb5_N_sf"/>
</dbReference>
<dbReference type="InterPro" id="IPR000783">
    <property type="entry name" value="RNA_pol_subH/Rpb5_C"/>
</dbReference>
<dbReference type="InterPro" id="IPR020608">
    <property type="entry name" value="RNA_pol_subH/Rpb5_CS"/>
</dbReference>
<dbReference type="InterPro" id="IPR035913">
    <property type="entry name" value="RPB5-like_sf"/>
</dbReference>
<dbReference type="NCBIfam" id="NF007129">
    <property type="entry name" value="PRK09570.1"/>
    <property type="match status" value="1"/>
</dbReference>
<dbReference type="PANTHER" id="PTHR10535">
    <property type="entry name" value="DNA-DIRECTED RNA POLYMERASES I, II, AND III SUBUNIT RPABC1"/>
    <property type="match status" value="1"/>
</dbReference>
<dbReference type="PANTHER" id="PTHR10535:SF0">
    <property type="entry name" value="DNA-DIRECTED RNA POLYMERASES I, II, AND III SUBUNIT RPABC1"/>
    <property type="match status" value="1"/>
</dbReference>
<dbReference type="Pfam" id="PF01191">
    <property type="entry name" value="RNA_pol_Rpb5_C"/>
    <property type="match status" value="1"/>
</dbReference>
<dbReference type="Pfam" id="PF03871">
    <property type="entry name" value="RNA_pol_Rpb5_N"/>
    <property type="match status" value="1"/>
</dbReference>
<dbReference type="PIRSF" id="PIRSF000747">
    <property type="entry name" value="RPB5"/>
    <property type="match status" value="1"/>
</dbReference>
<dbReference type="SUPFAM" id="SSF53036">
    <property type="entry name" value="Eukaryotic RPB5 N-terminal domain"/>
    <property type="match status" value="1"/>
</dbReference>
<dbReference type="SUPFAM" id="SSF55287">
    <property type="entry name" value="RPB5-like RNA polymerase subunit"/>
    <property type="match status" value="1"/>
</dbReference>
<dbReference type="PROSITE" id="PS01110">
    <property type="entry name" value="RNA_POL_H_23KD"/>
    <property type="match status" value="1"/>
</dbReference>
<keyword id="KW-0007">Acetylation</keyword>
<keyword id="KW-0240">DNA-directed RNA polymerase</keyword>
<keyword id="KW-1017">Isopeptide bond</keyword>
<keyword id="KW-0539">Nucleus</keyword>
<keyword id="KW-1185">Reference proteome</keyword>
<keyword id="KW-0804">Transcription</keyword>
<keyword id="KW-0832">Ubl conjugation</keyword>
<gene>
    <name type="primary">POLR2E</name>
</gene>
<reference key="1">
    <citation type="submission" date="2004-11" db="EMBL/GenBank/DDBJ databases">
        <authorList>
            <consortium name="The German cDNA consortium"/>
        </authorList>
    </citation>
    <scope>NUCLEOTIDE SEQUENCE [LARGE SCALE MRNA]</scope>
    <source>
        <tissue>Brain cortex</tissue>
    </source>
</reference>
<protein>
    <recommendedName>
        <fullName>DNA-directed RNA polymerases I, II, and III subunit RPABC1</fullName>
        <shortName>RNA polymerases I, II, and III subunit ABC1</shortName>
    </recommendedName>
    <alternativeName>
        <fullName>DNA-directed RNA polymerase II subunit E</fullName>
    </alternativeName>
    <alternativeName>
        <fullName>RPB5 homolog</fullName>
    </alternativeName>
</protein>
<name>RPAB1_PONAB</name>
<evidence type="ECO:0000250" key="1"/>
<evidence type="ECO:0000250" key="2">
    <source>
        <dbReference type="UniProtKB" id="P19388"/>
    </source>
</evidence>
<evidence type="ECO:0000250" key="3">
    <source>
        <dbReference type="UniProtKB" id="P20434"/>
    </source>
</evidence>
<evidence type="ECO:0000305" key="4"/>